<sequence>MFQRLNKMFVGEVTTSSSHEPEFSEKEDDEWILVDFIDTCTGFSAEEEEEDEDIGEESSAEHTSVFSCLPTSLECLADTSDSCFLQFESCPMEESWFITPPPCFTAGGLTTIKVETSPMENLLIEHPSMSVYAVHNSCPGLSEASCGNDDYNSSGPRMEAQSELGTHIHCCVAALAAQATFLEQPKSFRPSQWIKGHSERQSLNRNGLRRQNLTRDCHTRQMKHRCWAVHQPCPRQYNY</sequence>
<organism>
    <name type="scientific">Rattus norvegicus</name>
    <name type="common">Rat</name>
    <dbReference type="NCBI Taxonomy" id="10116"/>
    <lineage>
        <taxon>Eukaryota</taxon>
        <taxon>Metazoa</taxon>
        <taxon>Chordata</taxon>
        <taxon>Craniata</taxon>
        <taxon>Vertebrata</taxon>
        <taxon>Euteleostomi</taxon>
        <taxon>Mammalia</taxon>
        <taxon>Eutheria</taxon>
        <taxon>Euarchontoglires</taxon>
        <taxon>Glires</taxon>
        <taxon>Rodentia</taxon>
        <taxon>Myomorpha</taxon>
        <taxon>Muroidea</taxon>
        <taxon>Muridae</taxon>
        <taxon>Murinae</taxon>
        <taxon>Rattus</taxon>
    </lineage>
</organism>
<dbReference type="EMBL" id="AB107917">
    <property type="protein sequence ID" value="BAC75468.1"/>
    <property type="molecule type" value="mRNA"/>
</dbReference>
<dbReference type="RefSeq" id="NP_851598.1">
    <property type="nucleotide sequence ID" value="NM_181084.2"/>
</dbReference>
<dbReference type="FunCoup" id="Q80YE2">
    <property type="interactions" value="884"/>
</dbReference>
<dbReference type="STRING" id="10116.ENSRNOP00000010591"/>
<dbReference type="PhosphoSitePlus" id="Q80YE2"/>
<dbReference type="PaxDb" id="10116-ENSRNOP00000010591"/>
<dbReference type="GeneID" id="297822"/>
<dbReference type="KEGG" id="rno:297822"/>
<dbReference type="UCSC" id="RGD:631423">
    <property type="organism name" value="rat"/>
</dbReference>
<dbReference type="AGR" id="RGD:631423"/>
<dbReference type="CTD" id="94241"/>
<dbReference type="RGD" id="631423">
    <property type="gene designation" value="Trp53inp1"/>
</dbReference>
<dbReference type="eggNOG" id="ENOG502QTG4">
    <property type="taxonomic scope" value="Eukaryota"/>
</dbReference>
<dbReference type="InParanoid" id="Q80YE2"/>
<dbReference type="OrthoDB" id="10041339at2759"/>
<dbReference type="PhylomeDB" id="Q80YE2"/>
<dbReference type="PRO" id="PR:Q80YE2"/>
<dbReference type="Proteomes" id="UP000002494">
    <property type="component" value="Unplaced"/>
</dbReference>
<dbReference type="GO" id="GO:0005776">
    <property type="term" value="C:autophagosome"/>
    <property type="evidence" value="ECO:0000250"/>
    <property type="project" value="UniProtKB"/>
</dbReference>
<dbReference type="GO" id="GO:0031410">
    <property type="term" value="C:cytoplasmic vesicle"/>
    <property type="evidence" value="ECO:0007669"/>
    <property type="project" value="UniProtKB-KW"/>
</dbReference>
<dbReference type="GO" id="GO:0005829">
    <property type="term" value="C:cytosol"/>
    <property type="evidence" value="ECO:0000250"/>
    <property type="project" value="UniProtKB"/>
</dbReference>
<dbReference type="GO" id="GO:0005634">
    <property type="term" value="C:nucleus"/>
    <property type="evidence" value="ECO:0000250"/>
    <property type="project" value="UniProtKB"/>
</dbReference>
<dbReference type="GO" id="GO:0016605">
    <property type="term" value="C:PML body"/>
    <property type="evidence" value="ECO:0007669"/>
    <property type="project" value="UniProtKB-SubCell"/>
</dbReference>
<dbReference type="GO" id="GO:0016209">
    <property type="term" value="F:antioxidant activity"/>
    <property type="evidence" value="ECO:0000250"/>
    <property type="project" value="UniProtKB"/>
</dbReference>
<dbReference type="GO" id="GO:0006915">
    <property type="term" value="P:apoptotic process"/>
    <property type="evidence" value="ECO:0007669"/>
    <property type="project" value="UniProtKB-KW"/>
</dbReference>
<dbReference type="GO" id="GO:0048102">
    <property type="term" value="P:autophagic cell death"/>
    <property type="evidence" value="ECO:0000250"/>
    <property type="project" value="UniProtKB"/>
</dbReference>
<dbReference type="GO" id="GO:0000045">
    <property type="term" value="P:autophagosome assembly"/>
    <property type="evidence" value="ECO:0000318"/>
    <property type="project" value="GO_Central"/>
</dbReference>
<dbReference type="GO" id="GO:0071361">
    <property type="term" value="P:cellular response to ethanol"/>
    <property type="evidence" value="ECO:0000266"/>
    <property type="project" value="RGD"/>
</dbReference>
<dbReference type="GO" id="GO:0071447">
    <property type="term" value="P:cellular response to hydroperoxide"/>
    <property type="evidence" value="ECO:0000266"/>
    <property type="project" value="RGD"/>
</dbReference>
<dbReference type="GO" id="GO:0072703">
    <property type="term" value="P:cellular response to methyl methanesulfonate"/>
    <property type="evidence" value="ECO:0000266"/>
    <property type="project" value="RGD"/>
</dbReference>
<dbReference type="GO" id="GO:0034644">
    <property type="term" value="P:cellular response to UV"/>
    <property type="evidence" value="ECO:0000266"/>
    <property type="project" value="RGD"/>
</dbReference>
<dbReference type="GO" id="GO:0030336">
    <property type="term" value="P:negative regulation of cell migration"/>
    <property type="evidence" value="ECO:0000250"/>
    <property type="project" value="UniProtKB"/>
</dbReference>
<dbReference type="GO" id="GO:0008285">
    <property type="term" value="P:negative regulation of cell population proliferation"/>
    <property type="evidence" value="ECO:0000250"/>
    <property type="project" value="UniProtKB"/>
</dbReference>
<dbReference type="GO" id="GO:0048147">
    <property type="term" value="P:negative regulation of fibroblast proliferation"/>
    <property type="evidence" value="ECO:0000266"/>
    <property type="project" value="RGD"/>
</dbReference>
<dbReference type="GO" id="GO:0010629">
    <property type="term" value="P:negative regulation of gene expression"/>
    <property type="evidence" value="ECO:0000266"/>
    <property type="project" value="RGD"/>
</dbReference>
<dbReference type="GO" id="GO:1904761">
    <property type="term" value="P:negative regulation of myofibroblast differentiation"/>
    <property type="evidence" value="ECO:0000266"/>
    <property type="project" value="RGD"/>
</dbReference>
<dbReference type="GO" id="GO:0043065">
    <property type="term" value="P:positive regulation of apoptotic process"/>
    <property type="evidence" value="ECO:0000266"/>
    <property type="project" value="RGD"/>
</dbReference>
<dbReference type="GO" id="GO:0010508">
    <property type="term" value="P:positive regulation of autophagy"/>
    <property type="evidence" value="ECO:0000250"/>
    <property type="project" value="UniProtKB"/>
</dbReference>
<dbReference type="GO" id="GO:0045893">
    <property type="term" value="P:positive regulation of DNA-templated transcription"/>
    <property type="evidence" value="ECO:0000250"/>
    <property type="project" value="UniProtKB"/>
</dbReference>
<dbReference type="GO" id="GO:0010628">
    <property type="term" value="P:positive regulation of gene expression"/>
    <property type="evidence" value="ECO:0000266"/>
    <property type="project" value="RGD"/>
</dbReference>
<dbReference type="GO" id="GO:0009408">
    <property type="term" value="P:response to heat"/>
    <property type="evidence" value="ECO:0000266"/>
    <property type="project" value="RGD"/>
</dbReference>
<dbReference type="InterPro" id="IPR029431">
    <property type="entry name" value="TP53INP"/>
</dbReference>
<dbReference type="PANTHER" id="PTHR31671">
    <property type="entry name" value="DIABETES AND OBESITY REGULATED, ISOFORM G"/>
    <property type="match status" value="1"/>
</dbReference>
<dbReference type="PANTHER" id="PTHR31671:SF0">
    <property type="entry name" value="TUMOR PROTEIN P53-INDUCIBLE NUCLEAR PROTEIN 1"/>
    <property type="match status" value="1"/>
</dbReference>
<dbReference type="Pfam" id="PF14839">
    <property type="entry name" value="DOR"/>
    <property type="match status" value="1"/>
</dbReference>
<protein>
    <recommendedName>
        <fullName>Tumor protein p53-inducible nuclear protein 1</fullName>
    </recommendedName>
    <alternativeName>
        <fullName>Stress-induced protein</fullName>
    </alternativeName>
    <alternativeName>
        <fullName>Thymus-expressed acidic protein</fullName>
        <shortName>TEAP</shortName>
    </alternativeName>
    <alternativeName>
        <fullName>p53-dependent damage-inducible nuclear protein 1</fullName>
        <shortName>p53DINP1</shortName>
    </alternativeName>
</protein>
<reference key="1">
    <citation type="submission" date="2003-04" db="EMBL/GenBank/DDBJ databases">
        <title>Cloning of rat SIP protein.</title>
        <authorList>
            <person name="Wakizono T."/>
            <person name="Suzuki G."/>
            <person name="Nibuya M."/>
            <person name="Nomura S."/>
        </authorList>
    </citation>
    <scope>NUCLEOTIDE SEQUENCE [MRNA]</scope>
    <source>
        <strain>Sprague-Dawley</strain>
        <tissue>Brain</tissue>
    </source>
</reference>
<reference key="2">
    <citation type="journal article" date="2004" name="J. Pancreas">
        <title>Tumor protein p53-induced nuclear protein 1 (TP53INP1) in spontaneous chronic pancreatitis in the WBN/Kob rat: drug effects on its expression in the pancreas.</title>
        <authorList>
            <person name="Jiang P.-H."/>
            <person name="Motoo Y."/>
            <person name="Iovanna J.L."/>
            <person name="Pebusque M.-J."/>
            <person name="Xie M.-J."/>
            <person name="Okada G."/>
            <person name="Sawabu N."/>
        </authorList>
    </citation>
    <scope>TISSUE SPECIFICITY</scope>
    <scope>INDUCTION</scope>
</reference>
<evidence type="ECO:0000250" key="1"/>
<evidence type="ECO:0000269" key="2">
    <source>
    </source>
</evidence>
<proteinExistence type="evidence at transcript level"/>
<gene>
    <name type="primary">Trp53inp1</name>
    <name type="synonym">Sip</name>
</gene>
<name>T53I1_RAT</name>
<keyword id="KW-0010">Activator</keyword>
<keyword id="KW-0049">Antioxidant</keyword>
<keyword id="KW-0053">Apoptosis</keyword>
<keyword id="KW-0072">Autophagy</keyword>
<keyword id="KW-0963">Cytoplasm</keyword>
<keyword id="KW-0968">Cytoplasmic vesicle</keyword>
<keyword id="KW-0539">Nucleus</keyword>
<keyword id="KW-1185">Reference proteome</keyword>
<keyword id="KW-0804">Transcription</keyword>
<keyword id="KW-0805">Transcription regulation</keyword>
<keyword id="KW-0043">Tumor suppressor</keyword>
<accession>Q80YE2</accession>
<comment type="function">
    <text evidence="1">Antiproliferative and proapoptotic protein involved in cell stress response which acts as a dual regulator of transcription and autophagy. Acts as a positive regulator of autophagy. In response to cellular stress or activation of autophagy, relocates to autophagosomes where it interacts with autophagosome-associated proteins GABARAP, GABARAPL1/L2, MAP1LC3A/B/C and regulates autophagy. Acts as an antioxidant and plays a major role in p53/TP53-driven oxidative stress response. Possesses both a p53/TP53-independent intracellular reactive oxygen species (ROS) regulatory function and a p53/TP53-dependent transcription regulatory function. Positively regulates p53/TP53 and p73/TP73 and stimulates their capacity to induce apoptosis and regulate cell cycle. In response to double-strand DNA breaks, promotes p53/TP53 phosphorylation on 'Ser-46' and subsequent apoptosis. Acts as a tumor suppressor by inducing cell death by an autophagy and caspase-dependent mechanism. Can reduce cell migration by regulating the expression of SPARC (By similarity).</text>
</comment>
<comment type="subunit">
    <text evidence="1">Interacts with p53/TP53 and HIPK2. Interacts with PRKCG, GABARAP, GABARAPL1, GABARAPL2, MAP1LC3A, MAP1LC3B and MAP1LC3C.</text>
</comment>
<comment type="subcellular location">
    <subcellularLocation>
        <location evidence="1">Cytoplasm</location>
        <location evidence="1">Cytosol</location>
    </subcellularLocation>
    <subcellularLocation>
        <location evidence="1">Nucleus</location>
    </subcellularLocation>
    <subcellularLocation>
        <location evidence="1">Nucleus</location>
        <location evidence="1">PML body</location>
    </subcellularLocation>
    <subcellularLocation>
        <location evidence="1">Cytoplasmic vesicle</location>
        <location evidence="1">Autophagosome</location>
    </subcellularLocation>
    <text evidence="1">Shuttles between the nucleus and the cytoplasm, depending on cellular stress conditions, and re-localizes to autophagosomes on autophagy activation.</text>
</comment>
<comment type="tissue specificity">
    <text evidence="2">Specifically expressed by acinar cells of chronic pancreatitis tissue.</text>
</comment>
<comment type="induction">
    <text evidence="2">In chronic pancreatitis tissue, expression is suppressed by camostat mesilate, a serine protease inhibitor, and by Saiko-keishi-to, a herbal medicine.</text>
</comment>
<comment type="domain">
    <text evidence="1">The LC3 interacting region (LIR) motif mediates interaction with GABARAP, GABARAPL1, GABARAPL2, MAP1LC3A, MAP1LC3B and MAP1LC3C.</text>
</comment>
<feature type="chain" id="PRO_0000072408" description="Tumor protein p53-inducible nuclear protein 1">
    <location>
        <begin position="1"/>
        <end position="239"/>
    </location>
</feature>
<feature type="short sequence motif" description="LIR">
    <location>
        <begin position="25"/>
        <end position="37"/>
    </location>
</feature>